<sequence>MLLIPAIDLKDGHCVRLKQGDMDQSTIFSEDPAAMARNWVDKGARRLHLVDLNGAFAGKPKNEAAIKRILAEVGSEIDVQLGGGIRDLDTIERYLDAGLRYVIIGTAAVKNPGFLQDACTAFGGHIIVGLDAKDGRVATDGWSKLTGHEVVDLAKKFQDYGVESIIYTDIGRDGMLSGINIQATVKLAQALTIPVIASGGLSNMADIDALCAVEDEGVQGVICGRSIYSGDLDFEAAQERADELNG</sequence>
<feature type="chain" id="PRO_0000290505" description="1-(5-phosphoribosyl)-5-[(5-phosphoribosylamino)methylideneamino] imidazole-4-carboxamide isomerase">
    <location>
        <begin position="1"/>
        <end position="246"/>
    </location>
</feature>
<feature type="active site" description="Proton acceptor" evidence="1">
    <location>
        <position position="8"/>
    </location>
</feature>
<feature type="active site" description="Proton donor" evidence="1">
    <location>
        <position position="131"/>
    </location>
</feature>
<evidence type="ECO:0000255" key="1">
    <source>
        <dbReference type="HAMAP-Rule" id="MF_01014"/>
    </source>
</evidence>
<gene>
    <name evidence="1" type="primary">hisA</name>
    <name type="ordered locus">Pnap_0700</name>
</gene>
<reference key="1">
    <citation type="journal article" date="2009" name="Environ. Microbiol.">
        <title>The genome of Polaromonas naphthalenivorans strain CJ2, isolated from coal tar-contaminated sediment, reveals physiological and metabolic versatility and evolution through extensive horizontal gene transfer.</title>
        <authorList>
            <person name="Yagi J.M."/>
            <person name="Sims D."/>
            <person name="Brettin T."/>
            <person name="Bruce D."/>
            <person name="Madsen E.L."/>
        </authorList>
    </citation>
    <scope>NUCLEOTIDE SEQUENCE [LARGE SCALE GENOMIC DNA]</scope>
    <source>
        <strain>CJ2</strain>
    </source>
</reference>
<accession>A1VK41</accession>
<protein>
    <recommendedName>
        <fullName evidence="1">1-(5-phosphoribosyl)-5-[(5-phosphoribosylamino)methylideneamino] imidazole-4-carboxamide isomerase</fullName>
        <ecNumber evidence="1">5.3.1.16</ecNumber>
    </recommendedName>
    <alternativeName>
        <fullName evidence="1">Phosphoribosylformimino-5-aminoimidazole carboxamide ribotide isomerase</fullName>
    </alternativeName>
</protein>
<organism>
    <name type="scientific">Polaromonas naphthalenivorans (strain CJ2)</name>
    <dbReference type="NCBI Taxonomy" id="365044"/>
    <lineage>
        <taxon>Bacteria</taxon>
        <taxon>Pseudomonadati</taxon>
        <taxon>Pseudomonadota</taxon>
        <taxon>Betaproteobacteria</taxon>
        <taxon>Burkholderiales</taxon>
        <taxon>Comamonadaceae</taxon>
        <taxon>Polaromonas</taxon>
    </lineage>
</organism>
<dbReference type="EC" id="5.3.1.16" evidence="1"/>
<dbReference type="EMBL" id="CP000529">
    <property type="protein sequence ID" value="ABM36019.1"/>
    <property type="molecule type" value="Genomic_DNA"/>
</dbReference>
<dbReference type="RefSeq" id="WP_011800114.1">
    <property type="nucleotide sequence ID" value="NC_008781.1"/>
</dbReference>
<dbReference type="SMR" id="A1VK41"/>
<dbReference type="STRING" id="365044.Pnap_0700"/>
<dbReference type="KEGG" id="pna:Pnap_0700"/>
<dbReference type="eggNOG" id="COG0106">
    <property type="taxonomic scope" value="Bacteria"/>
</dbReference>
<dbReference type="HOGENOM" id="CLU_048577_1_1_4"/>
<dbReference type="OrthoDB" id="9807749at2"/>
<dbReference type="UniPathway" id="UPA00031">
    <property type="reaction ID" value="UER00009"/>
</dbReference>
<dbReference type="Proteomes" id="UP000000644">
    <property type="component" value="Chromosome"/>
</dbReference>
<dbReference type="GO" id="GO:0005737">
    <property type="term" value="C:cytoplasm"/>
    <property type="evidence" value="ECO:0007669"/>
    <property type="project" value="UniProtKB-SubCell"/>
</dbReference>
<dbReference type="GO" id="GO:0003949">
    <property type="term" value="F:1-(5-phosphoribosyl)-5-[(5-phosphoribosylamino)methylideneamino]imidazole-4-carboxamide isomerase activity"/>
    <property type="evidence" value="ECO:0007669"/>
    <property type="project" value="UniProtKB-UniRule"/>
</dbReference>
<dbReference type="GO" id="GO:0000105">
    <property type="term" value="P:L-histidine biosynthetic process"/>
    <property type="evidence" value="ECO:0007669"/>
    <property type="project" value="UniProtKB-UniRule"/>
</dbReference>
<dbReference type="GO" id="GO:0000162">
    <property type="term" value="P:L-tryptophan biosynthetic process"/>
    <property type="evidence" value="ECO:0007669"/>
    <property type="project" value="TreeGrafter"/>
</dbReference>
<dbReference type="CDD" id="cd04732">
    <property type="entry name" value="HisA"/>
    <property type="match status" value="1"/>
</dbReference>
<dbReference type="FunFam" id="3.20.20.70:FF:000009">
    <property type="entry name" value="1-(5-phosphoribosyl)-5-[(5-phosphoribosylamino)methylideneamino] imidazole-4-carboxamide isomerase"/>
    <property type="match status" value="1"/>
</dbReference>
<dbReference type="Gene3D" id="3.20.20.70">
    <property type="entry name" value="Aldolase class I"/>
    <property type="match status" value="1"/>
</dbReference>
<dbReference type="HAMAP" id="MF_01014">
    <property type="entry name" value="HisA"/>
    <property type="match status" value="1"/>
</dbReference>
<dbReference type="InterPro" id="IPR013785">
    <property type="entry name" value="Aldolase_TIM"/>
</dbReference>
<dbReference type="InterPro" id="IPR006062">
    <property type="entry name" value="His_biosynth"/>
</dbReference>
<dbReference type="InterPro" id="IPR006063">
    <property type="entry name" value="HisA_bact_arch"/>
</dbReference>
<dbReference type="InterPro" id="IPR044524">
    <property type="entry name" value="Isoase_HisA-like"/>
</dbReference>
<dbReference type="InterPro" id="IPR023016">
    <property type="entry name" value="Isoase_HisA-like_bact"/>
</dbReference>
<dbReference type="InterPro" id="IPR011060">
    <property type="entry name" value="RibuloseP-bd_barrel"/>
</dbReference>
<dbReference type="NCBIfam" id="TIGR00007">
    <property type="entry name" value="1-(5-phosphoribosyl)-5-[(5-phosphoribosylamino)methylideneamino]imidazole-4-carboxamide isomerase"/>
    <property type="match status" value="1"/>
</dbReference>
<dbReference type="PANTHER" id="PTHR43090">
    <property type="entry name" value="1-(5-PHOSPHORIBOSYL)-5-[(5-PHOSPHORIBOSYLAMINO)METHYLIDENEAMINO] IMIDAZOLE-4-CARBOXAMIDE ISOMERASE"/>
    <property type="match status" value="1"/>
</dbReference>
<dbReference type="PANTHER" id="PTHR43090:SF2">
    <property type="entry name" value="1-(5-PHOSPHORIBOSYL)-5-[(5-PHOSPHORIBOSYLAMINO)METHYLIDENEAMINO] IMIDAZOLE-4-CARBOXAMIDE ISOMERASE"/>
    <property type="match status" value="1"/>
</dbReference>
<dbReference type="Pfam" id="PF00977">
    <property type="entry name" value="His_biosynth"/>
    <property type="match status" value="1"/>
</dbReference>
<dbReference type="SUPFAM" id="SSF51366">
    <property type="entry name" value="Ribulose-phoshate binding barrel"/>
    <property type="match status" value="1"/>
</dbReference>
<comment type="catalytic activity">
    <reaction evidence="1">
        <text>1-(5-phospho-beta-D-ribosyl)-5-[(5-phospho-beta-D-ribosylamino)methylideneamino]imidazole-4-carboxamide = 5-[(5-phospho-1-deoxy-D-ribulos-1-ylimino)methylamino]-1-(5-phospho-beta-D-ribosyl)imidazole-4-carboxamide</text>
        <dbReference type="Rhea" id="RHEA:15469"/>
        <dbReference type="ChEBI" id="CHEBI:58435"/>
        <dbReference type="ChEBI" id="CHEBI:58525"/>
        <dbReference type="EC" id="5.3.1.16"/>
    </reaction>
</comment>
<comment type="pathway">
    <text evidence="1">Amino-acid biosynthesis; L-histidine biosynthesis; L-histidine from 5-phospho-alpha-D-ribose 1-diphosphate: step 4/9.</text>
</comment>
<comment type="subcellular location">
    <subcellularLocation>
        <location evidence="1">Cytoplasm</location>
    </subcellularLocation>
</comment>
<comment type="similarity">
    <text evidence="1">Belongs to the HisA/HisF family.</text>
</comment>
<name>HIS4_POLNA</name>
<keyword id="KW-0028">Amino-acid biosynthesis</keyword>
<keyword id="KW-0963">Cytoplasm</keyword>
<keyword id="KW-0368">Histidine biosynthesis</keyword>
<keyword id="KW-0413">Isomerase</keyword>
<keyword id="KW-1185">Reference proteome</keyword>
<proteinExistence type="inferred from homology"/>